<evidence type="ECO:0000255" key="1">
    <source>
        <dbReference type="HAMAP-Rule" id="MF_01021"/>
    </source>
</evidence>
<protein>
    <recommendedName>
        <fullName evidence="1">Phosphoribosyl-AMP cyclohydrolase</fullName>
        <shortName evidence="1">PRA-CH</shortName>
        <ecNumber evidence="1">3.5.4.19</ecNumber>
    </recommendedName>
</protein>
<sequence>MTLDPNVAARLKRNAEGLFTAVVQERGSGDVLMVAWMDDDALDRTLKTREATYYSRSRGEQWVKGATSGHTQHVHSVRLDCDGDTVLLTVDQVGGACHTGDHTCFDATVLL</sequence>
<comment type="function">
    <text evidence="1">Catalyzes the hydrolysis of the adenine ring of phosphoribosyl-AMP.</text>
</comment>
<comment type="catalytic activity">
    <reaction evidence="1">
        <text>1-(5-phospho-beta-D-ribosyl)-5'-AMP + H2O = 1-(5-phospho-beta-D-ribosyl)-5-[(5-phospho-beta-D-ribosylamino)methylideneamino]imidazole-4-carboxamide</text>
        <dbReference type="Rhea" id="RHEA:20049"/>
        <dbReference type="ChEBI" id="CHEBI:15377"/>
        <dbReference type="ChEBI" id="CHEBI:58435"/>
        <dbReference type="ChEBI" id="CHEBI:59457"/>
        <dbReference type="EC" id="3.5.4.19"/>
    </reaction>
</comment>
<comment type="cofactor">
    <cofactor evidence="1">
        <name>Mg(2+)</name>
        <dbReference type="ChEBI" id="CHEBI:18420"/>
    </cofactor>
    <text evidence="1">Binds 1 Mg(2+) ion per subunit.</text>
</comment>
<comment type="cofactor">
    <cofactor evidence="1">
        <name>Zn(2+)</name>
        <dbReference type="ChEBI" id="CHEBI:29105"/>
    </cofactor>
    <text evidence="1">Binds 1 zinc ion per subunit.</text>
</comment>
<comment type="pathway">
    <text evidence="1">Amino-acid biosynthesis; L-histidine biosynthesis; L-histidine from 5-phospho-alpha-D-ribose 1-diphosphate: step 3/9.</text>
</comment>
<comment type="subunit">
    <text evidence="1">Homodimer.</text>
</comment>
<comment type="subcellular location">
    <subcellularLocation>
        <location evidence="1">Cytoplasm</location>
    </subcellularLocation>
</comment>
<comment type="similarity">
    <text evidence="1">Belongs to the PRA-CH family.</text>
</comment>
<accession>B2HQA9</accession>
<reference key="1">
    <citation type="journal article" date="2008" name="Genome Res.">
        <title>Insights from the complete genome sequence of Mycobacterium marinum on the evolution of Mycobacterium tuberculosis.</title>
        <authorList>
            <person name="Stinear T.P."/>
            <person name="Seemann T."/>
            <person name="Harrison P.F."/>
            <person name="Jenkin G.A."/>
            <person name="Davies J.K."/>
            <person name="Johnson P.D."/>
            <person name="Abdellah Z."/>
            <person name="Arrowsmith C."/>
            <person name="Chillingworth T."/>
            <person name="Churcher C."/>
            <person name="Clarke K."/>
            <person name="Cronin A."/>
            <person name="Davis P."/>
            <person name="Goodhead I."/>
            <person name="Holroyd N."/>
            <person name="Jagels K."/>
            <person name="Lord A."/>
            <person name="Moule S."/>
            <person name="Mungall K."/>
            <person name="Norbertczak H."/>
            <person name="Quail M.A."/>
            <person name="Rabbinowitsch E."/>
            <person name="Walker D."/>
            <person name="White B."/>
            <person name="Whitehead S."/>
            <person name="Small P.L."/>
            <person name="Brosch R."/>
            <person name="Ramakrishnan L."/>
            <person name="Fischbach M.A."/>
            <person name="Parkhill J."/>
            <person name="Cole S.T."/>
        </authorList>
    </citation>
    <scope>NUCLEOTIDE SEQUENCE [LARGE SCALE GENOMIC DNA]</scope>
    <source>
        <strain>ATCC BAA-535 / M</strain>
    </source>
</reference>
<organism>
    <name type="scientific">Mycobacterium marinum (strain ATCC BAA-535 / M)</name>
    <dbReference type="NCBI Taxonomy" id="216594"/>
    <lineage>
        <taxon>Bacteria</taxon>
        <taxon>Bacillati</taxon>
        <taxon>Actinomycetota</taxon>
        <taxon>Actinomycetes</taxon>
        <taxon>Mycobacteriales</taxon>
        <taxon>Mycobacteriaceae</taxon>
        <taxon>Mycobacterium</taxon>
        <taxon>Mycobacterium ulcerans group</taxon>
    </lineage>
</organism>
<gene>
    <name evidence="1" type="primary">hisI</name>
    <name type="ordered locus">MMAR_2402</name>
</gene>
<name>HIS3_MYCMM</name>
<dbReference type="EC" id="3.5.4.19" evidence="1"/>
<dbReference type="EMBL" id="CP000854">
    <property type="protein sequence ID" value="ACC40852.1"/>
    <property type="molecule type" value="Genomic_DNA"/>
</dbReference>
<dbReference type="RefSeq" id="WP_012394149.1">
    <property type="nucleotide sequence ID" value="NC_010612.1"/>
</dbReference>
<dbReference type="SMR" id="B2HQA9"/>
<dbReference type="STRING" id="216594.MMAR_2402"/>
<dbReference type="KEGG" id="mmi:MMAR_2402"/>
<dbReference type="eggNOG" id="COG0139">
    <property type="taxonomic scope" value="Bacteria"/>
</dbReference>
<dbReference type="HOGENOM" id="CLU_048577_5_1_11"/>
<dbReference type="OrthoDB" id="9795769at2"/>
<dbReference type="UniPathway" id="UPA00031">
    <property type="reaction ID" value="UER00008"/>
</dbReference>
<dbReference type="Proteomes" id="UP000001190">
    <property type="component" value="Chromosome"/>
</dbReference>
<dbReference type="GO" id="GO:0005737">
    <property type="term" value="C:cytoplasm"/>
    <property type="evidence" value="ECO:0007669"/>
    <property type="project" value="UniProtKB-SubCell"/>
</dbReference>
<dbReference type="GO" id="GO:0000287">
    <property type="term" value="F:magnesium ion binding"/>
    <property type="evidence" value="ECO:0007669"/>
    <property type="project" value="UniProtKB-UniRule"/>
</dbReference>
<dbReference type="GO" id="GO:0004635">
    <property type="term" value="F:phosphoribosyl-AMP cyclohydrolase activity"/>
    <property type="evidence" value="ECO:0007669"/>
    <property type="project" value="UniProtKB-UniRule"/>
</dbReference>
<dbReference type="GO" id="GO:0008270">
    <property type="term" value="F:zinc ion binding"/>
    <property type="evidence" value="ECO:0007669"/>
    <property type="project" value="UniProtKB-UniRule"/>
</dbReference>
<dbReference type="GO" id="GO:0000105">
    <property type="term" value="P:L-histidine biosynthetic process"/>
    <property type="evidence" value="ECO:0007669"/>
    <property type="project" value="UniProtKB-UniRule"/>
</dbReference>
<dbReference type="FunFam" id="3.10.20.810:FF:000001">
    <property type="entry name" value="Histidine biosynthesis bifunctional protein HisIE"/>
    <property type="match status" value="1"/>
</dbReference>
<dbReference type="Gene3D" id="3.10.20.810">
    <property type="entry name" value="Phosphoribosyl-AMP cyclohydrolase"/>
    <property type="match status" value="1"/>
</dbReference>
<dbReference type="HAMAP" id="MF_01021">
    <property type="entry name" value="HisI"/>
    <property type="match status" value="1"/>
</dbReference>
<dbReference type="InterPro" id="IPR026660">
    <property type="entry name" value="PRA-CH"/>
</dbReference>
<dbReference type="InterPro" id="IPR002496">
    <property type="entry name" value="PRib_AMP_CycHydrolase_dom"/>
</dbReference>
<dbReference type="InterPro" id="IPR038019">
    <property type="entry name" value="PRib_AMP_CycHydrolase_sf"/>
</dbReference>
<dbReference type="NCBIfam" id="NF000768">
    <property type="entry name" value="PRK00051.1"/>
    <property type="match status" value="1"/>
</dbReference>
<dbReference type="PANTHER" id="PTHR42945">
    <property type="entry name" value="HISTIDINE BIOSYNTHESIS BIFUNCTIONAL PROTEIN"/>
    <property type="match status" value="1"/>
</dbReference>
<dbReference type="PANTHER" id="PTHR42945:SF11">
    <property type="entry name" value="PHOSPHORIBOSYL-AMP CYCLOHYDROLASE"/>
    <property type="match status" value="1"/>
</dbReference>
<dbReference type="Pfam" id="PF01502">
    <property type="entry name" value="PRA-CH"/>
    <property type="match status" value="1"/>
</dbReference>
<dbReference type="SUPFAM" id="SSF141734">
    <property type="entry name" value="HisI-like"/>
    <property type="match status" value="1"/>
</dbReference>
<proteinExistence type="inferred from homology"/>
<feature type="chain" id="PRO_1000135355" description="Phosphoribosyl-AMP cyclohydrolase">
    <location>
        <begin position="1"/>
        <end position="111"/>
    </location>
</feature>
<feature type="binding site" evidence="1">
    <location>
        <position position="80"/>
    </location>
    <ligand>
        <name>Mg(2+)</name>
        <dbReference type="ChEBI" id="CHEBI:18420"/>
    </ligand>
</feature>
<feature type="binding site" evidence="1">
    <location>
        <position position="81"/>
    </location>
    <ligand>
        <name>Zn(2+)</name>
        <dbReference type="ChEBI" id="CHEBI:29105"/>
        <note>ligand shared between dimeric partners</note>
    </ligand>
</feature>
<feature type="binding site" evidence="1">
    <location>
        <position position="82"/>
    </location>
    <ligand>
        <name>Mg(2+)</name>
        <dbReference type="ChEBI" id="CHEBI:18420"/>
    </ligand>
</feature>
<feature type="binding site" evidence="1">
    <location>
        <position position="84"/>
    </location>
    <ligand>
        <name>Mg(2+)</name>
        <dbReference type="ChEBI" id="CHEBI:18420"/>
    </ligand>
</feature>
<feature type="binding site" evidence="1">
    <location>
        <position position="97"/>
    </location>
    <ligand>
        <name>Zn(2+)</name>
        <dbReference type="ChEBI" id="CHEBI:29105"/>
        <note>ligand shared between dimeric partners</note>
    </ligand>
</feature>
<feature type="binding site" evidence="1">
    <location>
        <position position="104"/>
    </location>
    <ligand>
        <name>Zn(2+)</name>
        <dbReference type="ChEBI" id="CHEBI:29105"/>
        <note>ligand shared between dimeric partners</note>
    </ligand>
</feature>
<keyword id="KW-0028">Amino-acid biosynthesis</keyword>
<keyword id="KW-0963">Cytoplasm</keyword>
<keyword id="KW-0368">Histidine biosynthesis</keyword>
<keyword id="KW-0378">Hydrolase</keyword>
<keyword id="KW-0460">Magnesium</keyword>
<keyword id="KW-0479">Metal-binding</keyword>
<keyword id="KW-1185">Reference proteome</keyword>
<keyword id="KW-0862">Zinc</keyword>